<sequence>MQTAIIDYGMGNLHSVLKSVRTAGQLAGKNVEIFLSGDPERVSRADKVIFPGQGAMPDCMAALTRGGLDEAVKDALKNKPFFGICVGAQLLFDHSEEGNTDGLGWFGGKVRRFERDLLDPQGCRLKVPHMGWNTVRQTQNHPLFQGIPQDTRFYFVHSYYFAPENPETILGESDYPSPFACIVGKDNVFATQFHTEKSHDAGLTMLKNFLNW</sequence>
<organism>
    <name type="scientific">Neisseria meningitidis serogroup A / serotype 4A (strain DSM 15465 / Z2491)</name>
    <dbReference type="NCBI Taxonomy" id="122587"/>
    <lineage>
        <taxon>Bacteria</taxon>
        <taxon>Pseudomonadati</taxon>
        <taxon>Pseudomonadota</taxon>
        <taxon>Betaproteobacteria</taxon>
        <taxon>Neisseriales</taxon>
        <taxon>Neisseriaceae</taxon>
        <taxon>Neisseria</taxon>
    </lineage>
</organism>
<dbReference type="EC" id="4.3.2.10"/>
<dbReference type="EC" id="3.5.1.2"/>
<dbReference type="EMBL" id="AL157959">
    <property type="protein sequence ID" value="CAM08078.1"/>
    <property type="molecule type" value="Genomic_DNA"/>
</dbReference>
<dbReference type="PIR" id="D81929">
    <property type="entry name" value="D81929"/>
</dbReference>
<dbReference type="RefSeq" id="WP_002246856.1">
    <property type="nucleotide sequence ID" value="NC_003116.1"/>
</dbReference>
<dbReference type="SMR" id="Q9JVH3"/>
<dbReference type="MEROPS" id="C26.965"/>
<dbReference type="EnsemblBacteria" id="CAM08078">
    <property type="protein sequence ID" value="CAM08078"/>
    <property type="gene ID" value="NMA0840"/>
</dbReference>
<dbReference type="KEGG" id="nma:NMA0840"/>
<dbReference type="HOGENOM" id="CLU_071837_2_0_4"/>
<dbReference type="UniPathway" id="UPA00031">
    <property type="reaction ID" value="UER00010"/>
</dbReference>
<dbReference type="Proteomes" id="UP000000626">
    <property type="component" value="Chromosome"/>
</dbReference>
<dbReference type="GO" id="GO:0005737">
    <property type="term" value="C:cytoplasm"/>
    <property type="evidence" value="ECO:0007669"/>
    <property type="project" value="UniProtKB-SubCell"/>
</dbReference>
<dbReference type="GO" id="GO:0004359">
    <property type="term" value="F:glutaminase activity"/>
    <property type="evidence" value="ECO:0007669"/>
    <property type="project" value="UniProtKB-EC"/>
</dbReference>
<dbReference type="GO" id="GO:0000107">
    <property type="term" value="F:imidazoleglycerol-phosphate synthase activity"/>
    <property type="evidence" value="ECO:0007669"/>
    <property type="project" value="UniProtKB-UniRule"/>
</dbReference>
<dbReference type="GO" id="GO:0016829">
    <property type="term" value="F:lyase activity"/>
    <property type="evidence" value="ECO:0007669"/>
    <property type="project" value="UniProtKB-KW"/>
</dbReference>
<dbReference type="GO" id="GO:0000105">
    <property type="term" value="P:L-histidine biosynthetic process"/>
    <property type="evidence" value="ECO:0007669"/>
    <property type="project" value="UniProtKB-UniRule"/>
</dbReference>
<dbReference type="CDD" id="cd01748">
    <property type="entry name" value="GATase1_IGP_Synthase"/>
    <property type="match status" value="1"/>
</dbReference>
<dbReference type="FunFam" id="3.40.50.880:FF:000023">
    <property type="entry name" value="Imidazole glycerol phosphate synthase subunit HisH"/>
    <property type="match status" value="1"/>
</dbReference>
<dbReference type="Gene3D" id="3.40.50.880">
    <property type="match status" value="1"/>
</dbReference>
<dbReference type="HAMAP" id="MF_00278">
    <property type="entry name" value="HisH"/>
    <property type="match status" value="1"/>
</dbReference>
<dbReference type="InterPro" id="IPR029062">
    <property type="entry name" value="Class_I_gatase-like"/>
</dbReference>
<dbReference type="InterPro" id="IPR017926">
    <property type="entry name" value="GATASE"/>
</dbReference>
<dbReference type="InterPro" id="IPR010139">
    <property type="entry name" value="Imidazole-glycPsynth_HisH"/>
</dbReference>
<dbReference type="NCBIfam" id="TIGR01855">
    <property type="entry name" value="IMP_synth_hisH"/>
    <property type="match status" value="1"/>
</dbReference>
<dbReference type="PANTHER" id="PTHR42701">
    <property type="entry name" value="IMIDAZOLE GLYCEROL PHOSPHATE SYNTHASE SUBUNIT HISH"/>
    <property type="match status" value="1"/>
</dbReference>
<dbReference type="PANTHER" id="PTHR42701:SF2">
    <property type="entry name" value="IMIDAZOLE GLYCEROL PHOSPHATE SYNTHASE SUBUNIT HISH 1"/>
    <property type="match status" value="1"/>
</dbReference>
<dbReference type="Pfam" id="PF00117">
    <property type="entry name" value="GATase"/>
    <property type="match status" value="1"/>
</dbReference>
<dbReference type="PIRSF" id="PIRSF000495">
    <property type="entry name" value="Amidotransf_hisH"/>
    <property type="match status" value="1"/>
</dbReference>
<dbReference type="SUPFAM" id="SSF52317">
    <property type="entry name" value="Class I glutamine amidotransferase-like"/>
    <property type="match status" value="1"/>
</dbReference>
<dbReference type="PROSITE" id="PS51273">
    <property type="entry name" value="GATASE_TYPE_1"/>
    <property type="match status" value="1"/>
</dbReference>
<comment type="function">
    <text evidence="1">IGPS catalyzes the conversion of PRFAR and glutamine to IGP, AICAR and glutamate. The HisH subunit catalyzes the hydrolysis of glutamine to glutamate and ammonia as part of the synthesis of IGP and AICAR. The resulting ammonia molecule is channeled to the active site of HisF (By similarity).</text>
</comment>
<comment type="catalytic activity">
    <reaction>
        <text>5-[(5-phospho-1-deoxy-D-ribulos-1-ylimino)methylamino]-1-(5-phospho-beta-D-ribosyl)imidazole-4-carboxamide + L-glutamine = D-erythro-1-(imidazol-4-yl)glycerol 3-phosphate + 5-amino-1-(5-phospho-beta-D-ribosyl)imidazole-4-carboxamide + L-glutamate + H(+)</text>
        <dbReference type="Rhea" id="RHEA:24793"/>
        <dbReference type="ChEBI" id="CHEBI:15378"/>
        <dbReference type="ChEBI" id="CHEBI:29985"/>
        <dbReference type="ChEBI" id="CHEBI:58278"/>
        <dbReference type="ChEBI" id="CHEBI:58359"/>
        <dbReference type="ChEBI" id="CHEBI:58475"/>
        <dbReference type="ChEBI" id="CHEBI:58525"/>
        <dbReference type="EC" id="4.3.2.10"/>
    </reaction>
</comment>
<comment type="catalytic activity">
    <reaction>
        <text>L-glutamine + H2O = L-glutamate + NH4(+)</text>
        <dbReference type="Rhea" id="RHEA:15889"/>
        <dbReference type="ChEBI" id="CHEBI:15377"/>
        <dbReference type="ChEBI" id="CHEBI:28938"/>
        <dbReference type="ChEBI" id="CHEBI:29985"/>
        <dbReference type="ChEBI" id="CHEBI:58359"/>
        <dbReference type="EC" id="3.5.1.2"/>
    </reaction>
</comment>
<comment type="pathway">
    <text>Amino-acid biosynthesis; L-histidine biosynthesis; L-histidine from 5-phospho-alpha-D-ribose 1-diphosphate: step 5/9.</text>
</comment>
<comment type="subunit">
    <text evidence="1">Heterodimer of HisH and HisF.</text>
</comment>
<comment type="subcellular location">
    <subcellularLocation>
        <location evidence="1">Cytoplasm</location>
    </subcellularLocation>
</comment>
<keyword id="KW-0028">Amino-acid biosynthesis</keyword>
<keyword id="KW-0963">Cytoplasm</keyword>
<keyword id="KW-0315">Glutamine amidotransferase</keyword>
<keyword id="KW-0368">Histidine biosynthesis</keyword>
<keyword id="KW-0378">Hydrolase</keyword>
<keyword id="KW-0456">Lyase</keyword>
<evidence type="ECO:0000250" key="1"/>
<protein>
    <recommendedName>
        <fullName>Imidazole glycerol phosphate synthase subunit HisH</fullName>
        <ecNumber>4.3.2.10</ecNumber>
    </recommendedName>
    <alternativeName>
        <fullName>IGP synthase glutaminase subunit</fullName>
        <ecNumber>3.5.1.2</ecNumber>
    </alternativeName>
    <alternativeName>
        <fullName>IGP synthase subunit HisH</fullName>
    </alternativeName>
    <alternativeName>
        <fullName>ImGP synthase subunit HisH</fullName>
        <shortName>IGPS subunit HisH</shortName>
    </alternativeName>
</protein>
<name>HIS5_NEIMA</name>
<accession>Q9JVH3</accession>
<accession>A1IQP4</accession>
<proteinExistence type="inferred from homology"/>
<reference key="1">
    <citation type="journal article" date="2000" name="Nature">
        <title>Complete DNA sequence of a serogroup A strain of Neisseria meningitidis Z2491.</title>
        <authorList>
            <person name="Parkhill J."/>
            <person name="Achtman M."/>
            <person name="James K.D."/>
            <person name="Bentley S.D."/>
            <person name="Churcher C.M."/>
            <person name="Klee S.R."/>
            <person name="Morelli G."/>
            <person name="Basham D."/>
            <person name="Brown D."/>
            <person name="Chillingworth T."/>
            <person name="Davies R.M."/>
            <person name="Davis P."/>
            <person name="Devlin K."/>
            <person name="Feltwell T."/>
            <person name="Hamlin N."/>
            <person name="Holroyd S."/>
            <person name="Jagels K."/>
            <person name="Leather S."/>
            <person name="Moule S."/>
            <person name="Mungall K.L."/>
            <person name="Quail M.A."/>
            <person name="Rajandream M.A."/>
            <person name="Rutherford K.M."/>
            <person name="Simmonds M."/>
            <person name="Skelton J."/>
            <person name="Whitehead S."/>
            <person name="Spratt B.G."/>
            <person name="Barrell B.G."/>
        </authorList>
    </citation>
    <scope>NUCLEOTIDE SEQUENCE [LARGE SCALE GENOMIC DNA]</scope>
    <source>
        <strain>DSM 15465 / Z2491</strain>
    </source>
</reference>
<gene>
    <name type="primary">hisH</name>
    <name type="ordered locus">NMA0840</name>
</gene>
<feature type="chain" id="PRO_0000152397" description="Imidazole glycerol phosphate synthase subunit HisH">
    <location>
        <begin position="1"/>
        <end position="212"/>
    </location>
</feature>
<feature type="domain" description="Glutamine amidotransferase type-1">
    <location>
        <begin position="2"/>
        <end position="212"/>
    </location>
</feature>
<feature type="active site" description="Nucleophile" evidence="1">
    <location>
        <position position="85"/>
    </location>
</feature>
<feature type="active site" evidence="1">
    <location>
        <position position="194"/>
    </location>
</feature>
<feature type="active site" evidence="1">
    <location>
        <position position="196"/>
    </location>
</feature>